<feature type="peptide" id="PRO_0000233928" description="Skin secreted peptide 1" evidence="1">
    <location>
        <begin position="1"/>
        <end position="24"/>
    </location>
</feature>
<dbReference type="GO" id="GO:0005576">
    <property type="term" value="C:extracellular region"/>
    <property type="evidence" value="ECO:0000314"/>
    <property type="project" value="UniProtKB"/>
</dbReference>
<evidence type="ECO:0000269" key="1">
    <source>
    </source>
</evidence>
<evidence type="ECO:0000305" key="2"/>
<protein>
    <recommendedName>
        <fullName>Skin secreted peptide 1</fullName>
    </recommendedName>
</protein>
<sequence>RHHRKRIGHTVKQLAKLVKHIHEY</sequence>
<name>SKSP1_ASCTR</name>
<reference evidence="2" key="1">
    <citation type="journal article" date="2005" name="Gen. Comp. Endocrinol.">
        <title>Bradykinin-related peptides and tryptophyllins in the skin secretions of the most primitive extant frog, Ascaphus truei.</title>
        <authorList>
            <person name="Conlon J.M."/>
            <person name="Jouenne T."/>
            <person name="Cosette P."/>
            <person name="Cosquer D."/>
            <person name="Vaudry H."/>
            <person name="Taylor C.K."/>
            <person name="Abel P.W."/>
        </authorList>
    </citation>
    <scope>PROTEIN SEQUENCE</scope>
    <scope>SUBCELLULAR LOCATION</scope>
    <scope>TISSUE SPECIFICITY</scope>
    <scope>MASS SPECTROMETRY</scope>
    <source>
        <tissue evidence="1">Skin secretion</tissue>
    </source>
</reference>
<organism>
    <name type="scientific">Ascaphus truei</name>
    <name type="common">Coastal tailed frog</name>
    <dbReference type="NCBI Taxonomy" id="8439"/>
    <lineage>
        <taxon>Eukaryota</taxon>
        <taxon>Metazoa</taxon>
        <taxon>Chordata</taxon>
        <taxon>Craniata</taxon>
        <taxon>Vertebrata</taxon>
        <taxon>Euteleostomi</taxon>
        <taxon>Amphibia</taxon>
        <taxon>Batrachia</taxon>
        <taxon>Anura</taxon>
        <taxon>Ascaphidae</taxon>
        <taxon>Ascaphus</taxon>
    </lineage>
</organism>
<keyword id="KW-0903">Direct protein sequencing</keyword>
<keyword id="KW-0964">Secreted</keyword>
<proteinExistence type="evidence at protein level"/>
<comment type="subcellular location">
    <subcellularLocation>
        <location evidence="1">Secreted</location>
    </subcellularLocation>
</comment>
<comment type="tissue specificity">
    <text evidence="1">Expressed by the skin glands.</text>
</comment>
<comment type="mass spectrometry"/>
<accession>P84826</accession>